<organism>
    <name type="scientific">Rabies virus (strain China/MRV)</name>
    <name type="common">RABV</name>
    <dbReference type="NCBI Taxonomy" id="445791"/>
    <lineage>
        <taxon>Viruses</taxon>
        <taxon>Riboviria</taxon>
        <taxon>Orthornavirae</taxon>
        <taxon>Negarnaviricota</taxon>
        <taxon>Haploviricotina</taxon>
        <taxon>Monjiviricetes</taxon>
        <taxon>Mononegavirales</taxon>
        <taxon>Rhabdoviridae</taxon>
        <taxon>Alpharhabdovirinae</taxon>
        <taxon>Lyssavirus</taxon>
        <taxon>Lyssavirus rabies</taxon>
    </lineage>
</organism>
<name>PHOSP_RABVR</name>
<comment type="function">
    <text evidence="1 2">Non catalytic polymerase cofactor and regulatory protein that plays a role in viral transcription and replication. Stabilizes the RNA polymerase L to the N-RNA template and binds the soluble protein N, preventing it from encapsidating non-genomic RNA. Also inhibits host IFN-alpha and IFN-beta signaling by binding and retaining phosphorylated STAT1 in the cytoplasm or by inhibiting the DNA binding of STAT1 in the nucleus. Might be involved, through interaction with host dynein, in intracellular microtubule-dependent virus transport of incoming virus from the synapse toward the cell body (By similarity). Inhibits interferon induction pathways by interacting with host TBK1 and preventing the formation of dynamic cytoplasmic condensates that have liquid properties and that are essential for interferon production (By similarity).</text>
</comment>
<comment type="subunit">
    <molecule>Phosphoprotein</molecule>
    <text evidence="2">Homotrimer when phosphorylated. This trimer is stabilized by binding to the L protein. Binds soluble protein N, and ribonucleocapsid. Interacts with host DYNLL1 and DYNLL2; this interaction may play a role in intracellular microtubule-dependent virus transport of incoming virus. Interacts with host STAT1, STAT2 and PML. Interacts with host TBK1.</text>
</comment>
<comment type="subunit">
    <molecule>Isoform P3</molecule>
    <text evidence="1">Binds host PML.</text>
</comment>
<comment type="subcellular location">
    <molecule>Phosphoprotein</molecule>
    <subcellularLocation>
        <location>Virion</location>
    </subcellularLocation>
    <subcellularLocation>
        <location evidence="1">Host cytoplasm</location>
    </subcellularLocation>
</comment>
<comment type="subcellular location">
    <molecule>Isoform P3</molecule>
    <subcellularLocation>
        <location evidence="1">Host nucleus</location>
    </subcellularLocation>
</comment>
<comment type="subcellular location">
    <molecule>Isoform P4</molecule>
    <subcellularLocation>
        <location evidence="1">Host nucleus</location>
    </subcellularLocation>
</comment>
<comment type="subcellular location">
    <molecule>Isoform P5</molecule>
    <subcellularLocation>
        <location evidence="1">Host nucleus</location>
    </subcellularLocation>
</comment>
<comment type="alternative products">
    <event type="alternative initiation"/>
    <isoform>
        <id>Q0GBY3-1</id>
        <name>P</name>
        <sequence type="displayed"/>
    </isoform>
    <isoform>
        <id>Q0GBY3-2</id>
        <name>P2</name>
        <sequence type="described" ref="VSP_026920"/>
    </isoform>
    <isoform>
        <id>Q0GBY3-3</id>
        <name>P3</name>
        <sequence type="described" ref="VSP_026919"/>
    </isoform>
    <isoform>
        <id>Q0GBY3-4</id>
        <name>P4</name>
        <sequence type="described" ref="VSP_026918"/>
    </isoform>
    <isoform>
        <id>Q0GBY3-5</id>
        <name>P5</name>
        <sequence type="described" ref="VSP_026917"/>
    </isoform>
</comment>
<comment type="PTM">
    <text evidence="1">Phosphorylated by host PKC and by an unknown kinase.</text>
</comment>
<comment type="similarity">
    <text evidence="4">Belongs to the lyssavirus protein P family.</text>
</comment>
<reference key="1">
    <citation type="submission" date="2006-08" db="EMBL/GenBank/DDBJ databases">
        <authorList>
            <person name="Zhao Y.J."/>
            <person name="Guo L."/>
            <person name="Huang Y."/>
            <person name="Qian A.D."/>
        </authorList>
    </citation>
    <scope>NUCLEOTIDE SEQUENCE [GENOMIC RNA]</scope>
</reference>
<protein>
    <recommendedName>
        <fullName>Phosphoprotein</fullName>
        <shortName>Protein P</shortName>
    </recommendedName>
    <alternativeName>
        <fullName>Protein M1</fullName>
    </alternativeName>
</protein>
<sequence length="297" mass="33593">MSKIFVNPSAIRAGLADLEMAEETVDLINRNIEDNQAHLQGEPIEVDDLPEDMKRLHLDDEKSSNLGEMVRVGEGKYREDFQMDEGEDPNLLFQSYLDNVGVQIVRQMRSGERFLKIWSQTVEEIVSYVTVNFPNPPRRSSENKSTQTTGRELKKETTSAFSQRESQPSKARMVAQVAPGPPALEWSATNEEDDLSVEAEIAHQIAESFSKKYKFPSRSSGIFLYNFEQLKMNLDDIVKEAKNVPGVTRLAHDGSKIPLRCVLGYVALANSKKFQLLVEADKLSKIMQDDLNRYTSC</sequence>
<feature type="chain" id="PRO_0000295255" description="Phosphoprotein">
    <location>
        <begin position="1"/>
        <end position="297"/>
    </location>
</feature>
<feature type="region of interest" description="Disordered" evidence="3">
    <location>
        <begin position="134"/>
        <end position="176"/>
    </location>
</feature>
<feature type="region of interest" description="DYNLL1 and DYNLL2 binding" evidence="1">
    <location>
        <begin position="138"/>
        <end position="172"/>
    </location>
</feature>
<feature type="short sequence motif" description="Nuclear export signal" evidence="1">
    <location>
        <begin position="49"/>
        <end position="58"/>
    </location>
</feature>
<feature type="short sequence motif" description="Nuclear localization signal" evidence="1">
    <location>
        <begin position="211"/>
        <end position="214"/>
    </location>
</feature>
<feature type="compositionally biased region" description="Polar residues" evidence="3">
    <location>
        <begin position="158"/>
        <end position="169"/>
    </location>
</feature>
<feature type="modified residue" description="Phosphoserine; by host" evidence="1">
    <location>
        <position position="63"/>
    </location>
</feature>
<feature type="modified residue" description="Phosphoserine; by host" evidence="1">
    <location>
        <position position="64"/>
    </location>
</feature>
<feature type="modified residue" description="Phosphoserine; by host PKC" evidence="1">
    <location>
        <position position="162"/>
    </location>
</feature>
<feature type="modified residue" description="Phosphoserine; by host PKC" evidence="1">
    <location>
        <position position="210"/>
    </location>
</feature>
<feature type="modified residue" description="Phosphoserine; by host PKC" evidence="1">
    <location>
        <position position="271"/>
    </location>
</feature>
<feature type="splice variant" id="VSP_026917" description="In isoform P5." evidence="4">
    <location>
        <begin position="1"/>
        <end position="82"/>
    </location>
</feature>
<feature type="splice variant" id="VSP_026918" description="In isoform P4." evidence="4">
    <location>
        <begin position="1"/>
        <end position="68"/>
    </location>
</feature>
<feature type="splice variant" id="VSP_026919" description="In isoform P3." evidence="4">
    <location>
        <begin position="1"/>
        <end position="52"/>
    </location>
</feature>
<feature type="splice variant" id="VSP_026920" description="In isoform P2." evidence="4">
    <location>
        <begin position="1"/>
        <end position="19"/>
    </location>
</feature>
<feature type="helix" evidence="5">
    <location>
        <begin position="91"/>
        <end position="108"/>
    </location>
</feature>
<feature type="turn" evidence="5">
    <location>
        <begin position="109"/>
        <end position="111"/>
    </location>
</feature>
<feature type="helix" evidence="5">
    <location>
        <begin position="114"/>
        <end position="132"/>
    </location>
</feature>
<dbReference type="EMBL" id="DQ875050">
    <property type="protein sequence ID" value="ABI47938.1"/>
    <property type="molecule type" value="Genomic_RNA"/>
</dbReference>
<dbReference type="PDB" id="3L32">
    <property type="method" value="X-ray"/>
    <property type="resolution" value="1.50 A"/>
    <property type="chains" value="A/B=90-133"/>
</dbReference>
<dbReference type="PDBsum" id="3L32"/>
<dbReference type="SMR" id="Q0GBY3"/>
<dbReference type="EvolutionaryTrace" id="Q0GBY3"/>
<dbReference type="Proteomes" id="UP000008650">
    <property type="component" value="Genome"/>
</dbReference>
<dbReference type="GO" id="GO:0043657">
    <property type="term" value="C:host cell"/>
    <property type="evidence" value="ECO:0007669"/>
    <property type="project" value="GOC"/>
</dbReference>
<dbReference type="GO" id="GO:0030430">
    <property type="term" value="C:host cell cytoplasm"/>
    <property type="evidence" value="ECO:0007669"/>
    <property type="project" value="UniProtKB-SubCell"/>
</dbReference>
<dbReference type="GO" id="GO:0042025">
    <property type="term" value="C:host cell nucleus"/>
    <property type="evidence" value="ECO:0007669"/>
    <property type="project" value="UniProtKB-SubCell"/>
</dbReference>
<dbReference type="GO" id="GO:0044423">
    <property type="term" value="C:virion component"/>
    <property type="evidence" value="ECO:0007669"/>
    <property type="project" value="UniProtKB-KW"/>
</dbReference>
<dbReference type="GO" id="GO:0003968">
    <property type="term" value="F:RNA-directed RNA polymerase activity"/>
    <property type="evidence" value="ECO:0007669"/>
    <property type="project" value="InterPro"/>
</dbReference>
<dbReference type="GO" id="GO:0075521">
    <property type="term" value="P:microtubule-dependent intracellular transport of viral material towards nucleus"/>
    <property type="evidence" value="ECO:0007669"/>
    <property type="project" value="UniProtKB-KW"/>
</dbReference>
<dbReference type="GO" id="GO:0046718">
    <property type="term" value="P:symbiont entry into host cell"/>
    <property type="evidence" value="ECO:0007669"/>
    <property type="project" value="UniProtKB-KW"/>
</dbReference>
<dbReference type="GO" id="GO:0039723">
    <property type="term" value="P:symbiont-mediated suppression of host cytoplasmic pattern recognition receptor signaling pathway via inhibition of TBK1 activity"/>
    <property type="evidence" value="ECO:0007669"/>
    <property type="project" value="UniProtKB-KW"/>
</dbReference>
<dbReference type="GO" id="GO:0039563">
    <property type="term" value="P:symbiont-mediated suppression of host JAK-STAT cascade via inhibition of STAT1 activity"/>
    <property type="evidence" value="ECO:0007669"/>
    <property type="project" value="UniProtKB-KW"/>
</dbReference>
<dbReference type="GO" id="GO:0039564">
    <property type="term" value="P:symbiont-mediated suppression of host JAK-STAT cascade via inhibition of STAT2 activity"/>
    <property type="evidence" value="ECO:0007669"/>
    <property type="project" value="UniProtKB-KW"/>
</dbReference>
<dbReference type="GO" id="GO:0039722">
    <property type="term" value="P:symbiont-mediated suppression of host toll-like receptor signaling pathway"/>
    <property type="evidence" value="ECO:0007669"/>
    <property type="project" value="UniProtKB-KW"/>
</dbReference>
<dbReference type="GO" id="GO:0039502">
    <property type="term" value="P:symbiont-mediated suppression of host type I interferon-mediated signaling pathway"/>
    <property type="evidence" value="ECO:0007669"/>
    <property type="project" value="UniProtKB-KW"/>
</dbReference>
<dbReference type="GO" id="GO:0019083">
    <property type="term" value="P:viral transcription"/>
    <property type="evidence" value="ECO:0007669"/>
    <property type="project" value="InterPro"/>
</dbReference>
<dbReference type="CDD" id="cd21032">
    <property type="entry name" value="RABV_P-protein-C_like"/>
    <property type="match status" value="1"/>
</dbReference>
<dbReference type="DisProt" id="DP01759"/>
<dbReference type="FunFam" id="1.20.120.820:FF:000001">
    <property type="entry name" value="Phosphoprotein"/>
    <property type="match status" value="1"/>
</dbReference>
<dbReference type="Gene3D" id="6.10.140.1560">
    <property type="match status" value="1"/>
</dbReference>
<dbReference type="Gene3D" id="1.20.120.820">
    <property type="entry name" value="Phosphoprotein, C-terminal domain"/>
    <property type="match status" value="1"/>
</dbReference>
<dbReference type="InterPro" id="IPR004259">
    <property type="entry name" value="PP_M1-like"/>
</dbReference>
<dbReference type="InterPro" id="IPR037199">
    <property type="entry name" value="PP_M1_C"/>
</dbReference>
<dbReference type="InterPro" id="IPR049506">
    <property type="entry name" value="RABV_P-like_C"/>
</dbReference>
<dbReference type="Pfam" id="PF03012">
    <property type="entry name" value="PP_M1"/>
    <property type="match status" value="1"/>
</dbReference>
<dbReference type="SUPFAM" id="SSF118173">
    <property type="entry name" value="Phosphoprotein M1, C-terminal domain"/>
    <property type="match status" value="1"/>
</dbReference>
<gene>
    <name type="primary">P</name>
</gene>
<keyword id="KW-0002">3D-structure</keyword>
<keyword id="KW-0024">Alternative initiation</keyword>
<keyword id="KW-0143">Chaperone</keyword>
<keyword id="KW-1176">Cytoplasmic inwards viral transport</keyword>
<keyword id="KW-1035">Host cytoplasm</keyword>
<keyword id="KW-1048">Host nucleus</keyword>
<keyword id="KW-0945">Host-virus interaction</keyword>
<keyword id="KW-1090">Inhibition of host innate immune response by virus</keyword>
<keyword id="KW-1114">Inhibition of host interferon signaling pathway by virus</keyword>
<keyword id="KW-1105">Inhibition of host STAT1 by virus</keyword>
<keyword id="KW-1106">Inhibition of host STAT2 by virus</keyword>
<keyword id="KW-1223">Inhibition of host TBK1 by virus</keyword>
<keyword id="KW-1225">Inhibition of host TLR pathway by virus</keyword>
<keyword id="KW-0922">Interferon antiviral system evasion</keyword>
<keyword id="KW-1177">Microtubular inwards viral transport</keyword>
<keyword id="KW-0597">Phosphoprotein</keyword>
<keyword id="KW-0899">Viral immunoevasion</keyword>
<keyword id="KW-0693">Viral RNA replication</keyword>
<keyword id="KW-0946">Virion</keyword>
<keyword id="KW-1160">Virus entry into host cell</keyword>
<evidence type="ECO:0000250" key="1"/>
<evidence type="ECO:0000250" key="2">
    <source>
        <dbReference type="UniProtKB" id="P16286"/>
    </source>
</evidence>
<evidence type="ECO:0000256" key="3">
    <source>
        <dbReference type="SAM" id="MobiDB-lite"/>
    </source>
</evidence>
<evidence type="ECO:0000305" key="4"/>
<evidence type="ECO:0007829" key="5">
    <source>
        <dbReference type="PDB" id="3L32"/>
    </source>
</evidence>
<organismHost>
    <name type="scientific">Homo sapiens</name>
    <name type="common">Human</name>
    <dbReference type="NCBI Taxonomy" id="9606"/>
</organismHost>
<organismHost>
    <name type="scientific">Mammalia</name>
    <dbReference type="NCBI Taxonomy" id="40674"/>
</organismHost>
<proteinExistence type="evidence at protein level"/>
<accession>Q0GBY3</accession>